<evidence type="ECO:0000250" key="1">
    <source>
        <dbReference type="UniProtKB" id="P62910"/>
    </source>
</evidence>
<evidence type="ECO:0000250" key="2">
    <source>
        <dbReference type="UniProtKB" id="P62911"/>
    </source>
</evidence>
<evidence type="ECO:0000269" key="3">
    <source>
    </source>
</evidence>
<evidence type="ECO:0000269" key="4">
    <source>
    </source>
</evidence>
<evidence type="ECO:0000269" key="5">
    <source>
    </source>
</evidence>
<evidence type="ECO:0000269" key="6">
    <source>
    </source>
</evidence>
<evidence type="ECO:0000269" key="7">
    <source>
    </source>
</evidence>
<evidence type="ECO:0000269" key="8">
    <source>
    </source>
</evidence>
<evidence type="ECO:0000269" key="9">
    <source>
    </source>
</evidence>
<evidence type="ECO:0000269" key="10">
    <source>
    </source>
</evidence>
<evidence type="ECO:0000269" key="11">
    <source>
    </source>
</evidence>
<evidence type="ECO:0000269" key="12">
    <source>
    </source>
</evidence>
<evidence type="ECO:0000269" key="13">
    <source>
    </source>
</evidence>
<evidence type="ECO:0000269" key="14">
    <source>
    </source>
</evidence>
<evidence type="ECO:0000269" key="15">
    <source>
    </source>
</evidence>
<evidence type="ECO:0000305" key="16"/>
<evidence type="ECO:0007744" key="17">
    <source>
        <dbReference type="PDB" id="3JAG"/>
    </source>
</evidence>
<evidence type="ECO:0007744" key="18">
    <source>
        <dbReference type="PDB" id="3JAH"/>
    </source>
</evidence>
<evidence type="ECO:0007744" key="19">
    <source>
        <dbReference type="PDB" id="5LZS"/>
    </source>
</evidence>
<evidence type="ECO:0007744" key="20">
    <source>
        <dbReference type="PDB" id="5LZT"/>
    </source>
</evidence>
<evidence type="ECO:0007744" key="21">
    <source>
        <dbReference type="PDB" id="6D90"/>
    </source>
</evidence>
<evidence type="ECO:0007744" key="22">
    <source>
        <dbReference type="PDB" id="6GZ3"/>
    </source>
</evidence>
<evidence type="ECO:0007744" key="23">
    <source>
        <dbReference type="PDB" id="6HCF"/>
    </source>
</evidence>
<evidence type="ECO:0007744" key="24">
    <source>
        <dbReference type="PDB" id="6HCJ"/>
    </source>
</evidence>
<evidence type="ECO:0007744" key="25">
    <source>
        <dbReference type="PDB" id="6HCM"/>
    </source>
</evidence>
<evidence type="ECO:0007744" key="26">
    <source>
        <dbReference type="PDB" id="6MTB"/>
    </source>
</evidence>
<evidence type="ECO:0007744" key="27">
    <source>
        <dbReference type="PDB" id="6MTC"/>
    </source>
</evidence>
<evidence type="ECO:0007744" key="28">
    <source>
        <dbReference type="PDB" id="6P5I"/>
    </source>
</evidence>
<evidence type="ECO:0007744" key="29">
    <source>
        <dbReference type="PDB" id="6P5J"/>
    </source>
</evidence>
<evidence type="ECO:0007744" key="30">
    <source>
        <dbReference type="PDB" id="6R5Q"/>
    </source>
</evidence>
<evidence type="ECO:0007744" key="31">
    <source>
        <dbReference type="PDB" id="6R6G"/>
    </source>
</evidence>
<evidence type="ECO:0007744" key="32">
    <source>
        <dbReference type="PDB" id="6SGC"/>
    </source>
</evidence>
<evidence type="ECO:0007744" key="33">
    <source>
        <dbReference type="PDB" id="6ZVK"/>
    </source>
</evidence>
<evidence type="ECO:0007744" key="34">
    <source>
        <dbReference type="PDB" id="7A01"/>
    </source>
</evidence>
<evidence type="ECO:0007744" key="35">
    <source>
        <dbReference type="PDB" id="7OYD"/>
    </source>
</evidence>
<evidence type="ECO:0007744" key="36">
    <source>
        <dbReference type="PDB" id="7UCJ"/>
    </source>
</evidence>
<evidence type="ECO:0007744" key="37">
    <source>
        <dbReference type="PDB" id="7UCK"/>
    </source>
</evidence>
<evidence type="ECO:0007744" key="38">
    <source>
        <dbReference type="PDB" id="7ZJW"/>
    </source>
</evidence>
<evidence type="ECO:0007744" key="39">
    <source>
        <dbReference type="PDB" id="7ZJX"/>
    </source>
</evidence>
<sequence length="135" mass="15867">MASLRPLVKPKIIKKWTKKFIRHQSDRYVKIKRNWRKPRGIDNRVRRRFKGQILMPNIGYGSNKKTKHMLPSGFRKFLVHSVKELEVLLMCNKSYCAKIAHNVSSKNCKAIVERVAQLAIRVTNPNARLRSEENE</sequence>
<gene>
    <name type="primary">RPL32</name>
</gene>
<feature type="initiator methionine" description="Removed" evidence="1">
    <location>
        <position position="1"/>
    </location>
</feature>
<feature type="chain" id="PRO_0000460122" description="Large ribosomal subunit protein eL32">
    <location>
        <begin position="2"/>
        <end position="135"/>
    </location>
</feature>
<feature type="modified residue" description="N6-succinyllysine" evidence="2">
    <location>
        <position position="50"/>
    </location>
</feature>
<feature type="modified residue" description="Phosphoserine" evidence="1">
    <location>
        <position position="62"/>
    </location>
</feature>
<feature type="cross-link" description="Glycyl lysine isopeptide (Lys-Gly) (interchain with G-Cter in SUMO2)" evidence="1">
    <location>
        <position position="9"/>
    </location>
</feature>
<keyword id="KW-0002">3D-structure</keyword>
<keyword id="KW-0963">Cytoplasm</keyword>
<keyword id="KW-1017">Isopeptide bond</keyword>
<keyword id="KW-0597">Phosphoprotein</keyword>
<keyword id="KW-1185">Reference proteome</keyword>
<keyword id="KW-0687">Ribonucleoprotein</keyword>
<keyword id="KW-0689">Ribosomal protein</keyword>
<keyword id="KW-0832">Ubl conjugation</keyword>
<accession>G1TUN8</accession>
<accession>G1SHU8</accession>
<accession>G1U437</accession>
<protein>
    <recommendedName>
        <fullName>Large ribosomal subunit protein eL32</fullName>
    </recommendedName>
    <alternativeName>
        <fullName>60S ribosomal protein L32</fullName>
    </alternativeName>
</protein>
<dbReference type="EMBL" id="AAGW02045629">
    <property type="status" value="NOT_ANNOTATED_CDS"/>
    <property type="molecule type" value="Genomic_DNA"/>
</dbReference>
<dbReference type="RefSeq" id="NP_001164976.1">
    <property type="nucleotide sequence ID" value="NM_001171505.1"/>
</dbReference>
<dbReference type="PDB" id="3JAG">
    <property type="method" value="EM"/>
    <property type="resolution" value="3.65 A"/>
    <property type="chains" value="e=2-129"/>
</dbReference>
<dbReference type="PDB" id="3JAH">
    <property type="method" value="EM"/>
    <property type="resolution" value="3.45 A"/>
    <property type="chains" value="e=2-129"/>
</dbReference>
<dbReference type="PDB" id="3JAI">
    <property type="method" value="EM"/>
    <property type="resolution" value="3.65 A"/>
    <property type="chains" value="e=2-129"/>
</dbReference>
<dbReference type="PDB" id="5LZS">
    <property type="method" value="EM"/>
    <property type="resolution" value="3.31 A"/>
    <property type="chains" value="e=1-135"/>
</dbReference>
<dbReference type="PDB" id="5LZT">
    <property type="method" value="EM"/>
    <property type="resolution" value="3.65 A"/>
    <property type="chains" value="e=1-135"/>
</dbReference>
<dbReference type="PDB" id="5LZU">
    <property type="method" value="EM"/>
    <property type="resolution" value="3.75 A"/>
    <property type="chains" value="e=1-135"/>
</dbReference>
<dbReference type="PDB" id="5LZV">
    <property type="method" value="EM"/>
    <property type="resolution" value="3.35 A"/>
    <property type="chains" value="e=1-135"/>
</dbReference>
<dbReference type="PDB" id="5LZW">
    <property type="method" value="EM"/>
    <property type="resolution" value="3.53 A"/>
    <property type="chains" value="e=1-135"/>
</dbReference>
<dbReference type="PDB" id="5LZX">
    <property type="method" value="EM"/>
    <property type="resolution" value="3.67 A"/>
    <property type="chains" value="e=1-135"/>
</dbReference>
<dbReference type="PDB" id="5LZY">
    <property type="method" value="EM"/>
    <property type="resolution" value="3.99 A"/>
    <property type="chains" value="e=1-135"/>
</dbReference>
<dbReference type="PDB" id="5LZZ">
    <property type="method" value="EM"/>
    <property type="resolution" value="3.47 A"/>
    <property type="chains" value="e=1-135"/>
</dbReference>
<dbReference type="PDB" id="6D90">
    <property type="method" value="EM"/>
    <property type="resolution" value="3.20 A"/>
    <property type="chains" value="e=1-135"/>
</dbReference>
<dbReference type="PDB" id="6D9J">
    <property type="method" value="EM"/>
    <property type="resolution" value="3.20 A"/>
    <property type="chains" value="e=1-135"/>
</dbReference>
<dbReference type="PDB" id="6FTG">
    <property type="method" value="EM"/>
    <property type="resolution" value="9.10 A"/>
    <property type="chains" value="e=2-129"/>
</dbReference>
<dbReference type="PDB" id="6FTI">
    <property type="method" value="EM"/>
    <property type="resolution" value="4.20 A"/>
    <property type="chains" value="e=2-129"/>
</dbReference>
<dbReference type="PDB" id="6FTJ">
    <property type="method" value="EM"/>
    <property type="resolution" value="4.70 A"/>
    <property type="chains" value="e=2-129"/>
</dbReference>
<dbReference type="PDB" id="6GZ3">
    <property type="method" value="EM"/>
    <property type="resolution" value="3.60 A"/>
    <property type="chains" value="Ae=2-129"/>
</dbReference>
<dbReference type="PDB" id="6HCF">
    <property type="method" value="EM"/>
    <property type="resolution" value="3.90 A"/>
    <property type="chains" value="e3=1-135"/>
</dbReference>
<dbReference type="PDB" id="6HCJ">
    <property type="method" value="EM"/>
    <property type="resolution" value="3.80 A"/>
    <property type="chains" value="e3=1-135"/>
</dbReference>
<dbReference type="PDB" id="6HCM">
    <property type="method" value="EM"/>
    <property type="resolution" value="6.80 A"/>
    <property type="chains" value="e3=2-129"/>
</dbReference>
<dbReference type="PDB" id="6HCQ">
    <property type="method" value="EM"/>
    <property type="resolution" value="6.50 A"/>
    <property type="chains" value="e3=1-135"/>
</dbReference>
<dbReference type="PDB" id="6MTB">
    <property type="method" value="EM"/>
    <property type="resolution" value="3.60 A"/>
    <property type="chains" value="e=2-129"/>
</dbReference>
<dbReference type="PDB" id="6MTC">
    <property type="method" value="EM"/>
    <property type="resolution" value="3.40 A"/>
    <property type="chains" value="e=2-129"/>
</dbReference>
<dbReference type="PDB" id="6MTD">
    <property type="method" value="EM"/>
    <property type="resolution" value="3.30 A"/>
    <property type="chains" value="e=2-129"/>
</dbReference>
<dbReference type="PDB" id="6MTE">
    <property type="method" value="EM"/>
    <property type="resolution" value="3.40 A"/>
    <property type="chains" value="e=2-129"/>
</dbReference>
<dbReference type="PDB" id="6P5I">
    <property type="method" value="EM"/>
    <property type="resolution" value="3.10 A"/>
    <property type="chains" value="Ae=1-135"/>
</dbReference>
<dbReference type="PDB" id="6P5J">
    <property type="method" value="EM"/>
    <property type="resolution" value="3.10 A"/>
    <property type="chains" value="Ae=1-135"/>
</dbReference>
<dbReference type="PDB" id="6P5K">
    <property type="method" value="EM"/>
    <property type="resolution" value="3.10 A"/>
    <property type="chains" value="Ae=1-135"/>
</dbReference>
<dbReference type="PDB" id="6P5N">
    <property type="method" value="EM"/>
    <property type="resolution" value="3.20 A"/>
    <property type="chains" value="Ae=1-135"/>
</dbReference>
<dbReference type="PDB" id="6R5Q">
    <property type="method" value="EM"/>
    <property type="resolution" value="3.00 A"/>
    <property type="chains" value="e=2-129"/>
</dbReference>
<dbReference type="PDB" id="6R6G">
    <property type="method" value="EM"/>
    <property type="resolution" value="3.70 A"/>
    <property type="chains" value="e=2-129"/>
</dbReference>
<dbReference type="PDB" id="6R6P">
    <property type="method" value="EM"/>
    <property type="resolution" value="3.10 A"/>
    <property type="chains" value="e=2-129"/>
</dbReference>
<dbReference type="PDB" id="6R7Q">
    <property type="method" value="EM"/>
    <property type="resolution" value="3.90 A"/>
    <property type="chains" value="e=2-129"/>
</dbReference>
<dbReference type="PDB" id="6SGC">
    <property type="method" value="EM"/>
    <property type="resolution" value="2.80 A"/>
    <property type="chains" value="e2=1-135"/>
</dbReference>
<dbReference type="PDB" id="6T59">
    <property type="method" value="EM"/>
    <property type="resolution" value="3.11 A"/>
    <property type="chains" value="e3=1-135"/>
</dbReference>
<dbReference type="PDB" id="6ZVK">
    <property type="method" value="EM"/>
    <property type="resolution" value="3.49 A"/>
    <property type="chains" value="v2=2-129"/>
</dbReference>
<dbReference type="PDB" id="7A01">
    <property type="method" value="EM"/>
    <property type="resolution" value="3.60 A"/>
    <property type="chains" value="v2=2-129"/>
</dbReference>
<dbReference type="PDB" id="7MDZ">
    <property type="method" value="EM"/>
    <property type="resolution" value="3.20 A"/>
    <property type="chains" value="e=1-135"/>
</dbReference>
<dbReference type="PDB" id="7NFX">
    <property type="method" value="EM"/>
    <property type="resolution" value="3.20 A"/>
    <property type="chains" value="e=2-129"/>
</dbReference>
<dbReference type="PDB" id="7NWG">
    <property type="method" value="EM"/>
    <property type="resolution" value="3.80 A"/>
    <property type="chains" value="e3=2-129"/>
</dbReference>
<dbReference type="PDB" id="7NWH">
    <property type="method" value="EM"/>
    <property type="resolution" value="4.10 A"/>
    <property type="chains" value="e=1-129"/>
</dbReference>
<dbReference type="PDB" id="7NWI">
    <property type="method" value="EM"/>
    <property type="resolution" value="3.13 A"/>
    <property type="chains" value="e=2-129"/>
</dbReference>
<dbReference type="PDB" id="7O7Y">
    <property type="method" value="EM"/>
    <property type="resolution" value="2.20 A"/>
    <property type="chains" value="Be=1-135"/>
</dbReference>
<dbReference type="PDB" id="7O7Z">
    <property type="method" value="EM"/>
    <property type="resolution" value="2.40 A"/>
    <property type="chains" value="Be=1-135"/>
</dbReference>
<dbReference type="PDB" id="7O80">
    <property type="method" value="EM"/>
    <property type="resolution" value="2.90 A"/>
    <property type="chains" value="Be=1-135"/>
</dbReference>
<dbReference type="PDB" id="7O81">
    <property type="method" value="EM"/>
    <property type="resolution" value="3.10 A"/>
    <property type="chains" value="Be=1-135"/>
</dbReference>
<dbReference type="PDB" id="7OBR">
    <property type="method" value="EM"/>
    <property type="resolution" value="2.80 A"/>
    <property type="chains" value="e=2-129"/>
</dbReference>
<dbReference type="PDB" id="7OYD">
    <property type="method" value="EM"/>
    <property type="resolution" value="2.30 A"/>
    <property type="chains" value="e=2-129"/>
</dbReference>
<dbReference type="PDB" id="7QWQ">
    <property type="method" value="EM"/>
    <property type="resolution" value="2.83 A"/>
    <property type="chains" value="e=2-129"/>
</dbReference>
<dbReference type="PDB" id="7QWR">
    <property type="method" value="EM"/>
    <property type="resolution" value="2.90 A"/>
    <property type="chains" value="e=2-129"/>
</dbReference>
<dbReference type="PDB" id="7QWS">
    <property type="method" value="EM"/>
    <property type="resolution" value="3.40 A"/>
    <property type="chains" value="e=2-129"/>
</dbReference>
<dbReference type="PDB" id="7TM3">
    <property type="method" value="EM"/>
    <property type="resolution" value="3.25 A"/>
    <property type="chains" value="e=1-135"/>
</dbReference>
<dbReference type="PDB" id="7TOQ">
    <property type="method" value="EM"/>
    <property type="resolution" value="3.10 A"/>
    <property type="chains" value="AL32=2-129"/>
</dbReference>
<dbReference type="PDB" id="7TOR">
    <property type="method" value="EM"/>
    <property type="resolution" value="2.90 A"/>
    <property type="chains" value="AL32=2-129"/>
</dbReference>
<dbReference type="PDB" id="7TUT">
    <property type="method" value="EM"/>
    <property type="resolution" value="3.88 A"/>
    <property type="chains" value="e=1-135"/>
</dbReference>
<dbReference type="PDB" id="7UCJ">
    <property type="method" value="EM"/>
    <property type="resolution" value="3.10 A"/>
    <property type="chains" value="e=2-129"/>
</dbReference>
<dbReference type="PDB" id="7UCK">
    <property type="method" value="EM"/>
    <property type="resolution" value="2.80 A"/>
    <property type="chains" value="e=2-129"/>
</dbReference>
<dbReference type="PDB" id="7ZJW">
    <property type="method" value="EM"/>
    <property type="resolution" value="2.80 A"/>
    <property type="chains" value="Lh=1-135"/>
</dbReference>
<dbReference type="PDB" id="7ZJX">
    <property type="method" value="EM"/>
    <property type="resolution" value="3.10 A"/>
    <property type="chains" value="Lh=1-135"/>
</dbReference>
<dbReference type="PDB" id="8B5L">
    <property type="method" value="EM"/>
    <property type="resolution" value="2.86 A"/>
    <property type="chains" value="e=2-129"/>
</dbReference>
<dbReference type="PDB" id="8B6C">
    <property type="method" value="EM"/>
    <property type="resolution" value="2.79 A"/>
    <property type="chains" value="e=2-129"/>
</dbReference>
<dbReference type="PDB" id="8BHF">
    <property type="method" value="EM"/>
    <property type="resolution" value="3.10 A"/>
    <property type="chains" value="R1=2-129"/>
</dbReference>
<dbReference type="PDB" id="8BPO">
    <property type="method" value="EM"/>
    <property type="resolution" value="2.80 A"/>
    <property type="chains" value="d2=1-135"/>
</dbReference>
<dbReference type="PDB" id="8BTK">
    <property type="method" value="EM"/>
    <property type="resolution" value="3.50 A"/>
    <property type="chains" value="Be=1-135"/>
</dbReference>
<dbReference type="PDB" id="8P2K">
    <property type="method" value="EM"/>
    <property type="resolution" value="2.90 A"/>
    <property type="chains" value="Be=1-135"/>
</dbReference>
<dbReference type="PDB" id="8RJB">
    <property type="method" value="EM"/>
    <property type="resolution" value="2.69 A"/>
    <property type="chains" value="e=1-135"/>
</dbReference>
<dbReference type="PDB" id="8RJC">
    <property type="method" value="EM"/>
    <property type="resolution" value="2.90 A"/>
    <property type="chains" value="e=1-135"/>
</dbReference>
<dbReference type="PDB" id="8RJD">
    <property type="method" value="EM"/>
    <property type="resolution" value="2.79 A"/>
    <property type="chains" value="e=1-135"/>
</dbReference>
<dbReference type="PDB" id="8SCB">
    <property type="method" value="EM"/>
    <property type="resolution" value="2.50 A"/>
    <property type="chains" value="e=1-135"/>
</dbReference>
<dbReference type="PDB" id="8VFT">
    <property type="method" value="EM"/>
    <property type="resolution" value="3.30 A"/>
    <property type="chains" value="e=1-135"/>
</dbReference>
<dbReference type="PDB" id="9BDL">
    <property type="method" value="EM"/>
    <property type="resolution" value="2.80 A"/>
    <property type="chains" value="AL32=2-129"/>
</dbReference>
<dbReference type="PDB" id="9BDN">
    <property type="method" value="EM"/>
    <property type="resolution" value="3.10 A"/>
    <property type="chains" value="AL32=2-129"/>
</dbReference>
<dbReference type="PDB" id="9BDP">
    <property type="method" value="EM"/>
    <property type="resolution" value="3.70 A"/>
    <property type="chains" value="AL32=2-129"/>
</dbReference>
<dbReference type="PDBsum" id="3JAG"/>
<dbReference type="PDBsum" id="3JAH"/>
<dbReference type="PDBsum" id="3JAI"/>
<dbReference type="PDBsum" id="5LZS"/>
<dbReference type="PDBsum" id="5LZT"/>
<dbReference type="PDBsum" id="5LZU"/>
<dbReference type="PDBsum" id="5LZV"/>
<dbReference type="PDBsum" id="5LZW"/>
<dbReference type="PDBsum" id="5LZX"/>
<dbReference type="PDBsum" id="5LZY"/>
<dbReference type="PDBsum" id="5LZZ"/>
<dbReference type="PDBsum" id="6D90"/>
<dbReference type="PDBsum" id="6D9J"/>
<dbReference type="PDBsum" id="6FTG"/>
<dbReference type="PDBsum" id="6FTI"/>
<dbReference type="PDBsum" id="6FTJ"/>
<dbReference type="PDBsum" id="6GZ3"/>
<dbReference type="PDBsum" id="6HCF"/>
<dbReference type="PDBsum" id="6HCJ"/>
<dbReference type="PDBsum" id="6HCM"/>
<dbReference type="PDBsum" id="6HCQ"/>
<dbReference type="PDBsum" id="6MTB"/>
<dbReference type="PDBsum" id="6MTC"/>
<dbReference type="PDBsum" id="6MTD"/>
<dbReference type="PDBsum" id="6MTE"/>
<dbReference type="PDBsum" id="6P5I"/>
<dbReference type="PDBsum" id="6P5J"/>
<dbReference type="PDBsum" id="6P5K"/>
<dbReference type="PDBsum" id="6P5N"/>
<dbReference type="PDBsum" id="6R5Q"/>
<dbReference type="PDBsum" id="6R6G"/>
<dbReference type="PDBsum" id="6R6P"/>
<dbReference type="PDBsum" id="6R7Q"/>
<dbReference type="PDBsum" id="6SGC"/>
<dbReference type="PDBsum" id="6T59"/>
<dbReference type="PDBsum" id="6ZVK"/>
<dbReference type="PDBsum" id="7A01"/>
<dbReference type="PDBsum" id="7MDZ"/>
<dbReference type="PDBsum" id="7NFX"/>
<dbReference type="PDBsum" id="7NWG"/>
<dbReference type="PDBsum" id="7NWH"/>
<dbReference type="PDBsum" id="7NWI"/>
<dbReference type="PDBsum" id="7O7Y"/>
<dbReference type="PDBsum" id="7O7Z"/>
<dbReference type="PDBsum" id="7O80"/>
<dbReference type="PDBsum" id="7O81"/>
<dbReference type="PDBsum" id="7OBR"/>
<dbReference type="PDBsum" id="7OYD"/>
<dbReference type="PDBsum" id="7QWQ"/>
<dbReference type="PDBsum" id="7QWR"/>
<dbReference type="PDBsum" id="7QWS"/>
<dbReference type="PDBsum" id="7TM3"/>
<dbReference type="PDBsum" id="7TOQ"/>
<dbReference type="PDBsum" id="7TOR"/>
<dbReference type="PDBsum" id="7TUT"/>
<dbReference type="PDBsum" id="7UCJ"/>
<dbReference type="PDBsum" id="7UCK"/>
<dbReference type="PDBsum" id="7ZJW"/>
<dbReference type="PDBsum" id="7ZJX"/>
<dbReference type="PDBsum" id="8B5L"/>
<dbReference type="PDBsum" id="8B6C"/>
<dbReference type="PDBsum" id="8BHF"/>
<dbReference type="PDBsum" id="8BPO"/>
<dbReference type="PDBsum" id="8BTK"/>
<dbReference type="PDBsum" id="8P2K"/>
<dbReference type="PDBsum" id="8RJB"/>
<dbReference type="PDBsum" id="8RJC"/>
<dbReference type="PDBsum" id="8RJD"/>
<dbReference type="PDBsum" id="8SCB"/>
<dbReference type="PDBsum" id="8VFT"/>
<dbReference type="PDBsum" id="9BDL"/>
<dbReference type="PDBsum" id="9BDN"/>
<dbReference type="PDBsum" id="9BDP"/>
<dbReference type="EMDB" id="EMD-0098"/>
<dbReference type="EMDB" id="EMD-0099"/>
<dbReference type="EMDB" id="EMD-0100"/>
<dbReference type="EMDB" id="EMD-0192"/>
<dbReference type="EMDB" id="EMD-0194"/>
<dbReference type="EMDB" id="EMD-0195"/>
<dbReference type="EMDB" id="EMD-0197"/>
<dbReference type="EMDB" id="EMD-10181"/>
<dbReference type="EMDB" id="EMD-10380"/>
<dbReference type="EMDB" id="EMD-11459"/>
<dbReference type="EMDB" id="EMD-11590"/>
<dbReference type="EMDB" id="EMD-12303"/>
<dbReference type="EMDB" id="EMD-12631"/>
<dbReference type="EMDB" id="EMD-12632"/>
<dbReference type="EMDB" id="EMD-12633"/>
<dbReference type="EMDB" id="EMD-12756"/>
<dbReference type="EMDB" id="EMD-12757"/>
<dbReference type="EMDB" id="EMD-12758"/>
<dbReference type="EMDB" id="EMD-12759"/>
<dbReference type="EMDB" id="EMD-12801"/>
<dbReference type="EMDB" id="EMD-13114"/>
<dbReference type="EMDB" id="EMD-14191"/>
<dbReference type="EMDB" id="EMD-14192"/>
<dbReference type="EMDB" id="EMD-14193"/>
<dbReference type="EMDB" id="EMD-14751"/>
<dbReference type="EMDB" id="EMD-14752"/>
<dbReference type="EMDB" id="EMD-15860"/>
<dbReference type="EMDB" id="EMD-15863"/>
<dbReference type="EMDB" id="EMD-16052"/>
<dbReference type="EMDB" id="EMD-16155"/>
<dbReference type="EMDB" id="EMD-16232"/>
<dbReference type="EMDB" id="EMD-17367"/>
<dbReference type="EMDB" id="EMD-19195"/>
<dbReference type="EMDB" id="EMD-19197"/>
<dbReference type="EMDB" id="EMD-19198"/>
<dbReference type="EMDB" id="EMD-20255"/>
<dbReference type="EMDB" id="EMD-20256"/>
<dbReference type="EMDB" id="EMD-20257"/>
<dbReference type="EMDB" id="EMD-20258"/>
<dbReference type="EMDB" id="EMD-23785"/>
<dbReference type="EMDB" id="EMD-25994"/>
<dbReference type="EMDB" id="EMD-26035"/>
<dbReference type="EMDB" id="EMD-26036"/>
<dbReference type="EMDB" id="EMD-26133"/>
<dbReference type="EMDB" id="EMD-26444"/>
<dbReference type="EMDB" id="EMD-26445"/>
<dbReference type="EMDB" id="EMD-40344"/>
<dbReference type="EMDB" id="EMD-4130"/>
<dbReference type="EMDB" id="EMD-4131"/>
<dbReference type="EMDB" id="EMD-4132"/>
<dbReference type="EMDB" id="EMD-4133"/>
<dbReference type="EMDB" id="EMD-4134"/>
<dbReference type="EMDB" id="EMD-4135"/>
<dbReference type="EMDB" id="EMD-4136"/>
<dbReference type="EMDB" id="EMD-4137"/>
<dbReference type="EMDB" id="EMD-4300"/>
<dbReference type="EMDB" id="EMD-4315"/>
<dbReference type="EMDB" id="EMD-4316"/>
<dbReference type="EMDB" id="EMD-4317"/>
<dbReference type="EMDB" id="EMD-43189"/>
<dbReference type="EMDB" id="EMD-44461"/>
<dbReference type="EMDB" id="EMD-44463"/>
<dbReference type="EMDB" id="EMD-44464"/>
<dbReference type="EMDB" id="EMD-4729"/>
<dbReference type="EMDB" id="EMD-4735"/>
<dbReference type="EMDB" id="EMD-4737"/>
<dbReference type="EMDB" id="EMD-4745"/>
<dbReference type="EMDB" id="EMD-9237"/>
<dbReference type="EMDB" id="EMD-9239"/>
<dbReference type="EMDB" id="EMD-9240"/>
<dbReference type="EMDB" id="EMD-9242"/>
<dbReference type="SMR" id="G1TUN8"/>
<dbReference type="IntAct" id="G1TUN8">
    <property type="interactions" value="1"/>
</dbReference>
<dbReference type="STRING" id="9986.ENSOCUP00000020764"/>
<dbReference type="PaxDb" id="9986-ENSOCUP00000019296"/>
<dbReference type="GeneID" id="100328901"/>
<dbReference type="KEGG" id="ocu:100328901"/>
<dbReference type="eggNOG" id="KOG0878">
    <property type="taxonomic scope" value="Eukaryota"/>
</dbReference>
<dbReference type="HOGENOM" id="CLU_071479_4_1_1"/>
<dbReference type="InParanoid" id="G1TUN8"/>
<dbReference type="OrthoDB" id="268693at2759"/>
<dbReference type="TreeFam" id="TF314947"/>
<dbReference type="Proteomes" id="UP000001811">
    <property type="component" value="Chromosome 1"/>
</dbReference>
<dbReference type="Proteomes" id="UP000001811">
    <property type="component" value="Chromosome 15"/>
</dbReference>
<dbReference type="Proteomes" id="UP000001811">
    <property type="component" value="Chromosome 20"/>
</dbReference>
<dbReference type="Proteomes" id="UP000001811">
    <property type="component" value="Chromosome 9"/>
</dbReference>
<dbReference type="Bgee" id="ENSOCUG00000023227">
    <property type="expression patterns" value="Expressed in uterus and 16 other cell types or tissues"/>
</dbReference>
<dbReference type="GO" id="GO:0022625">
    <property type="term" value="C:cytosolic large ribosomal subunit"/>
    <property type="evidence" value="ECO:0007669"/>
    <property type="project" value="TreeGrafter"/>
</dbReference>
<dbReference type="GO" id="GO:0003735">
    <property type="term" value="F:structural constituent of ribosome"/>
    <property type="evidence" value="ECO:0007669"/>
    <property type="project" value="InterPro"/>
</dbReference>
<dbReference type="GO" id="GO:0006412">
    <property type="term" value="P:translation"/>
    <property type="evidence" value="ECO:0007669"/>
    <property type="project" value="InterPro"/>
</dbReference>
<dbReference type="CDD" id="cd00513">
    <property type="entry name" value="Ribosomal_L32_L32e"/>
    <property type="match status" value="1"/>
</dbReference>
<dbReference type="InterPro" id="IPR001515">
    <property type="entry name" value="Ribosomal_eL32"/>
</dbReference>
<dbReference type="InterPro" id="IPR018263">
    <property type="entry name" value="Ribosomal_eL32_CS"/>
</dbReference>
<dbReference type="InterPro" id="IPR036351">
    <property type="entry name" value="Ribosomal_eL32_sf"/>
</dbReference>
<dbReference type="PANTHER" id="PTHR23413">
    <property type="entry name" value="60S RIBOSOMAL PROTEIN L32 AND DNA-DIRECTED RNA POLYMERASE II, SUBUNIT N"/>
    <property type="match status" value="1"/>
</dbReference>
<dbReference type="PANTHER" id="PTHR23413:SF1">
    <property type="entry name" value="RIBOSOMAL PROTEIN L32"/>
    <property type="match status" value="1"/>
</dbReference>
<dbReference type="Pfam" id="PF01655">
    <property type="entry name" value="Ribosomal_L32e"/>
    <property type="match status" value="1"/>
</dbReference>
<dbReference type="SMART" id="SM01393">
    <property type="entry name" value="Ribosomal_L32e"/>
    <property type="match status" value="1"/>
</dbReference>
<dbReference type="SUPFAM" id="SSF52042">
    <property type="entry name" value="Ribosomal protein L32e"/>
    <property type="match status" value="1"/>
</dbReference>
<dbReference type="PROSITE" id="PS00580">
    <property type="entry name" value="RIBOSOMAL_L32E"/>
    <property type="match status" value="1"/>
</dbReference>
<comment type="function">
    <text evidence="3 4 8">Component of the large ribosomal subunit (PubMed:26245381, PubMed:27863242, PubMed:30517857). The ribosome is a large ribonucleoprotein complex responsible for the synthesis of proteins in the cell (PubMed:26245381, PubMed:27863242, PubMed:30517857).</text>
</comment>
<comment type="subunit">
    <text evidence="3 4 5 6 7 8 9 10 11 12 13 14 15">Component of the large ribosomal subunit.</text>
</comment>
<comment type="subcellular location">
    <subcellularLocation>
        <location evidence="3 4 5 6 7 8 9 10 11 12 13 14 15">Cytoplasm</location>
    </subcellularLocation>
</comment>
<comment type="similarity">
    <text evidence="16">Belongs to the eukaryotic ribosomal protein eL32 family.</text>
</comment>
<proteinExistence type="evidence at protein level"/>
<organism>
    <name type="scientific">Oryctolagus cuniculus</name>
    <name type="common">Rabbit</name>
    <dbReference type="NCBI Taxonomy" id="9986"/>
    <lineage>
        <taxon>Eukaryota</taxon>
        <taxon>Metazoa</taxon>
        <taxon>Chordata</taxon>
        <taxon>Craniata</taxon>
        <taxon>Vertebrata</taxon>
        <taxon>Euteleostomi</taxon>
        <taxon>Mammalia</taxon>
        <taxon>Eutheria</taxon>
        <taxon>Euarchontoglires</taxon>
        <taxon>Glires</taxon>
        <taxon>Lagomorpha</taxon>
        <taxon>Leporidae</taxon>
        <taxon>Oryctolagus</taxon>
    </lineage>
</organism>
<name>RL32_RABIT</name>
<reference key="1">
    <citation type="journal article" date="2011" name="Nature">
        <title>A high-resolution map of human evolutionary constraint using 29 mammals.</title>
        <authorList>
            <person name="Lindblad-Toh K."/>
            <person name="Garber M."/>
            <person name="Zuk O."/>
            <person name="Lin M.F."/>
            <person name="Parker B.J."/>
            <person name="Washietl S."/>
            <person name="Kheradpour P."/>
            <person name="Ernst J."/>
            <person name="Jordan G."/>
            <person name="Mauceli E."/>
            <person name="Ward L.D."/>
            <person name="Lowe C.B."/>
            <person name="Holloway A.K."/>
            <person name="Clamp M."/>
            <person name="Gnerre S."/>
            <person name="Alfoldi J."/>
            <person name="Beal K."/>
            <person name="Chang J."/>
            <person name="Clawson H."/>
            <person name="Cuff J."/>
            <person name="Di Palma F."/>
            <person name="Fitzgerald S."/>
            <person name="Flicek P."/>
            <person name="Guttman M."/>
            <person name="Hubisz M.J."/>
            <person name="Jaffe D.B."/>
            <person name="Jungreis I."/>
            <person name="Kent W.J."/>
            <person name="Kostka D."/>
            <person name="Lara M."/>
            <person name="Martins A.L."/>
            <person name="Massingham T."/>
            <person name="Moltke I."/>
            <person name="Raney B.J."/>
            <person name="Rasmussen M.D."/>
            <person name="Robinson J."/>
            <person name="Stark A."/>
            <person name="Vilella A.J."/>
            <person name="Wen J."/>
            <person name="Xie X."/>
            <person name="Zody M.C."/>
            <person name="Baldwin J."/>
            <person name="Bloom T."/>
            <person name="Chin C.W."/>
            <person name="Heiman D."/>
            <person name="Nicol R."/>
            <person name="Nusbaum C."/>
            <person name="Young S."/>
            <person name="Wilkinson J."/>
            <person name="Worley K.C."/>
            <person name="Kovar C.L."/>
            <person name="Muzny D.M."/>
            <person name="Gibbs R.A."/>
            <person name="Cree A."/>
            <person name="Dihn H.H."/>
            <person name="Fowler G."/>
            <person name="Jhangiani S."/>
            <person name="Joshi V."/>
            <person name="Lee S."/>
            <person name="Lewis L.R."/>
            <person name="Nazareth L.V."/>
            <person name="Okwuonu G."/>
            <person name="Santibanez J."/>
            <person name="Warren W.C."/>
            <person name="Mardis E.R."/>
            <person name="Weinstock G.M."/>
            <person name="Wilson R.K."/>
            <person name="Delehaunty K."/>
            <person name="Dooling D."/>
            <person name="Fronik C."/>
            <person name="Fulton L."/>
            <person name="Fulton B."/>
            <person name="Graves T."/>
            <person name="Minx P."/>
            <person name="Sodergren E."/>
            <person name="Birney E."/>
            <person name="Margulies E.H."/>
            <person name="Herrero J."/>
            <person name="Green E.D."/>
            <person name="Haussler D."/>
            <person name="Siepel A."/>
            <person name="Goldman N."/>
            <person name="Pollard K.S."/>
            <person name="Pedersen J.S."/>
            <person name="Lander E.S."/>
            <person name="Kellis M."/>
        </authorList>
    </citation>
    <scope>NUCLEOTIDE SEQUENCE [LARGE SCALE GENOMIC DNA]</scope>
    <source>
        <strain>Thorbecke</strain>
    </source>
</reference>
<reference evidence="17 18" key="2">
    <citation type="journal article" date="2015" name="Nature">
        <title>Structural basis for stop codon recognition in eukaryotes.</title>
        <authorList>
            <person name="Brown A."/>
            <person name="Shao S."/>
            <person name="Murray J."/>
            <person name="Hegde R.S."/>
            <person name="Ramakrishnan V."/>
        </authorList>
    </citation>
    <scope>STRUCTURE BY ELECTRON MICROSCOPY (3.45 ANGSTROMS) OF 1-107 OF RIBOSOME</scope>
    <scope>FUNCTION</scope>
    <scope>SUBCELLULAR LOCATION</scope>
    <scope>SUBUNIT</scope>
</reference>
<reference evidence="19 20" key="3">
    <citation type="journal article" date="2016" name="Cell">
        <title>Decoding mammalian ribosome-mRNA states by translational GTPase complexes.</title>
        <authorList>
            <person name="Shao S."/>
            <person name="Murray J."/>
            <person name="Brown A."/>
            <person name="Taunton J."/>
            <person name="Ramakrishnan V."/>
            <person name="Hegde R.S."/>
        </authorList>
    </citation>
    <scope>STRUCTURE BY ELECTRON MICROSCOPY (3.31 ANGSTROMS) OF RIBOSOME</scope>
    <scope>FUNCTION</scope>
    <scope>SUBCELLULAR LOCATION</scope>
    <scope>SUBUNIT</scope>
</reference>
<reference evidence="22" key="4">
    <citation type="journal article" date="2018" name="Cell Rep.">
        <title>tRNA translocation by the eukaryotic 80S ribosome and the impact of GTP hydrolysis.</title>
        <authorList>
            <person name="Flis J."/>
            <person name="Holm M."/>
            <person name="Rundlet E.J."/>
            <person name="Loerke J."/>
            <person name="Hilal T."/>
            <person name="Dabrowski M."/>
            <person name="Burger J."/>
            <person name="Mielke T."/>
            <person name="Blanchard S.C."/>
            <person name="Spahn C.M.T."/>
            <person name="Budkevich T.V."/>
        </authorList>
    </citation>
    <scope>STRUCTURE BY ELECTRON MICROSCOPY (3.60 ANGSTROMS) OF 1-108 OF RIBOSOME</scope>
    <scope>FUNCTION</scope>
    <scope>SUBCELLULAR LOCATION</scope>
    <scope>SUBUNIT</scope>
</reference>
<reference evidence="21" key="5">
    <citation type="journal article" date="2018" name="Elife">
        <title>Dual tRNA mimicry in the Cricket paralysis virus IRES uncovers an unexpected similarity with the Hepatitis C Virus IRES.</title>
        <authorList>
            <person name="Pisareva V.P."/>
            <person name="Pisarev A.V."/>
            <person name="Fernandez I.S."/>
        </authorList>
    </citation>
    <scope>STRUCTURE BY ELECTRON MICROSCOPY (3.20 ANGSTROMS) OF RIBOSOME</scope>
    <scope>SUBUNIT</scope>
    <scope>SUBCELLULAR LOCATION</scope>
</reference>
<reference evidence="26 27" key="6">
    <citation type="journal article" date="2018" name="Elife">
        <title>Structures of translationally inactive mammalian ribosomes.</title>
        <authorList>
            <person name="Brown A."/>
            <person name="Baird M.R."/>
            <person name="Yip M.C."/>
            <person name="Murray J."/>
            <person name="Shao S."/>
        </authorList>
    </citation>
    <scope>STRUCTURE BY ELECTRON MICROSCOPY (3.30 ANGSTROMS) OF 1-107 OF RIBOSOME</scope>
    <scope>SUBCELLULAR LOCATION</scope>
    <scope>SUBUNIT</scope>
</reference>
<reference evidence="23 24 25" key="7">
    <citation type="journal article" date="2018" name="Mol. Cell">
        <title>ZNF598 is a quality control sensor of collided ribosomes.</title>
        <authorList>
            <person name="Juszkiewicz S."/>
            <person name="Chandrasekaran V."/>
            <person name="Lin Z."/>
            <person name="Kraatz S."/>
            <person name="Ramakrishnan V."/>
            <person name="Hegde R.S."/>
        </authorList>
    </citation>
    <scope>STRUCTURE BY ELECTRON MICROSCOPY (3.80 ANGSTROMS) OF RIBOSOME</scope>
    <scope>SUBCELLULAR LOCATION</scope>
    <scope>SUBUNIT</scope>
</reference>
<reference evidence="30 31" key="8">
    <citation type="journal article" date="2019" name="Elife">
        <title>Structural and mutational analysis of the ribosome-arresting human XBP1u.</title>
        <authorList>
            <person name="Shanmuganathan V."/>
            <person name="Schiller N."/>
            <person name="Magoulopoulou A."/>
            <person name="Cheng J."/>
            <person name="Braunger K."/>
            <person name="Cymer F."/>
            <person name="Berninghausen O."/>
            <person name="Beatrix B."/>
            <person name="Kohno K."/>
            <person name="von Heijne G."/>
            <person name="Beckmann R."/>
        </authorList>
    </citation>
    <scope>STRUCTURE BY ELECTRON MICROSCOPY (3.00 ANGSTROMS) OF 1-107 OF RIBOSOME</scope>
    <scope>SUBCELLULAR LOCATION</scope>
    <scope>SUBUNIT</scope>
</reference>
<reference evidence="28 29" key="9">
    <citation type="journal article" date="2019" name="EMBO J.">
        <title>The Israeli acute paralysis virus IRES captures host ribosomes by mimicking a ribosomal state with hybrid tRNAs.</title>
        <authorList>
            <person name="Acosta-Reyes F."/>
            <person name="Neupane R."/>
            <person name="Frank J."/>
            <person name="Fernandez I.S."/>
        </authorList>
    </citation>
    <scope>STRUCTURE BY ELECTRON MICROSCOPY (3.10 ANGSTROMS) OF RIBOSOME</scope>
    <scope>SUBCELLULAR LOCATION</scope>
    <scope>SUBUNIT</scope>
</reference>
<reference evidence="32" key="10">
    <citation type="journal article" date="2019" name="Nat. Struct. Mol. Biol.">
        <title>Mechanism of ribosome stalling during translation of a poly(A) tail.</title>
        <authorList>
            <person name="Chandrasekaran V."/>
            <person name="Juszkiewicz S."/>
            <person name="Choi J."/>
            <person name="Puglisi J.D."/>
            <person name="Brown A."/>
            <person name="Shao S."/>
            <person name="Ramakrishnan V."/>
            <person name="Hegde R.S."/>
        </authorList>
    </citation>
    <scope>STRUCTURE BY ELECTRON MICROSCOPY (2.80 ANGSTROMS) OF RIBOSOME</scope>
    <scope>SUBCELLULAR LOCATION</scope>
    <scope>SUBUNIT</scope>
</reference>
<reference evidence="33 34" key="11">
    <citation type="journal article" date="2020" name="Cell Rep.">
        <title>The Halastavi arva virus intergenic region IRES promotes translation by the simplest possible initiation mechanism.</title>
        <authorList>
            <person name="Abaeva I.S."/>
            <person name="Vicens Q."/>
            <person name="Bochler A."/>
            <person name="Soufari H."/>
            <person name="Simonetti A."/>
            <person name="Pestova T.V."/>
            <person name="Hashem Y."/>
            <person name="Hellen C.U.T."/>
        </authorList>
    </citation>
    <scope>STRUCTURE BY ELECTRON MICROSCOPY (3.49 ANGSTROMS) OF RIBOSOME</scope>
    <scope>SUBCELLULAR LOCATION</scope>
    <scope>SUBUNIT</scope>
</reference>
<reference evidence="36 37" key="12">
    <citation type="journal article" date="2022" name="Mol. Cell">
        <title>Direct epitranscriptomic regulation of mammalian translation initiation through N4-acetylcytidine.</title>
        <authorList>
            <person name="Arango D."/>
            <person name="Sturgill D."/>
            <person name="Yang R."/>
            <person name="Kanai T."/>
            <person name="Bauer P."/>
            <person name="Roy J."/>
            <person name="Wang Z."/>
            <person name="Hosogane M."/>
            <person name="Schiffers S."/>
            <person name="Oberdoerffer S."/>
        </authorList>
    </citation>
    <scope>STRUCTURE BY ELECTRON MICROSCOPY (2.80 ANGSTROMS) OF 2-110 OF RIBOSOME</scope>
    <scope>SUBCELLULAR LOCATION</scope>
    <scope>SUBUNIT</scope>
</reference>
<reference evidence="38 39" key="13">
    <citation type="journal article" date="2022" name="Science">
        <title>Structure of the mammalian ribosome as it decodes the selenocysteine UGA codon.</title>
        <authorList>
            <person name="Hilal T."/>
            <person name="Killam B.Y."/>
            <person name="Grozdanovic M."/>
            <person name="Dobosz-Bartoszek M."/>
            <person name="Loerke J."/>
            <person name="Buerger J."/>
            <person name="Mielke T."/>
            <person name="Copeland P.R."/>
            <person name="Simonovic M."/>
            <person name="Spahn C.M.T."/>
        </authorList>
    </citation>
    <scope>STRUCTURE BY ELECTRON MICROSCOPY (2.80 ANGSTROMS) OF RIBOSOME</scope>
    <scope>SUBCELLULAR LOCATION</scope>
    <scope>SUBUNIT</scope>
</reference>
<reference evidence="35" key="14">
    <citation type="journal article" date="2023" name="Nature">
        <title>A molecular network of conserved factors keeps ribosomes dormant in the egg.</title>
        <authorList>
            <person name="Leesch F."/>
            <person name="Lorenzo-Orts L."/>
            <person name="Pribitzer C."/>
            <person name="Grishkovskaya I."/>
            <person name="Roehsner J."/>
            <person name="Chugunova A."/>
            <person name="Matzinger M."/>
            <person name="Roitinger E."/>
            <person name="Belacic K."/>
            <person name="Kandolf S."/>
            <person name="Lin T.Y."/>
            <person name="Mechtler K."/>
            <person name="Meinhart A."/>
            <person name="Haselbach D."/>
            <person name="Pauli A."/>
        </authorList>
    </citation>
    <scope>STRUCTURE BY ELECTRON MICROSCOPY (2.30 ANGSTROMS) OF RIBOSOME</scope>
    <scope>SUBCELLULAR LOCATION</scope>
    <scope>SUBUNIT</scope>
</reference>